<gene>
    <name evidence="1" type="primary">groEL</name>
    <name evidence="1" type="synonym">groL</name>
    <name type="ordered locus">BAMEG_0312</name>
</gene>
<sequence>MAKDIKFSEEARRSMLRGVDTLANAVKVTLGPKGRNVVLEKKFGSPLITNDGVTIAKEIELEDAFENMGAKLVAEVASKTNDVAGDGTTTATVLAQAMIREGLKNVTAGANPMGLRKGIEKAVVAAVEELKTISKPIEGKSSIAQVAAISAADEEVGQLIAEAMERVGNDGVITLEESKGFTTELDVVEGMQFDRGYASPYMITDSDKMEAVLDNPYILITDKKISNIQEILPVLEQVVQQGKPLLIIAEDVEGEALATLVVNKLRGTFNVVAVKAPGFGDRRKAMLEDIAILTGGEVITEELGRDLKSATVESLGRAGKVVVTKENTTVVEGVGSTEQIEARIGQIRAQLEETTSEFDREKLQERLAKLVGGVAVIKVGAATETELKERKLRIEDALNSTRAAVEEGIVAGGGTSLMNVYTKVASIVAEGDEATGINIVLRALEEPVRQIAINAGLEGSVVVERLKGEKVGVGFNAATGEWVNMLETGIVDPAKVTRSALQNAASVAAMFLTTEAVVADKPEPNAPAMPDMGGMGMGGMGGMM</sequence>
<reference key="1">
    <citation type="submission" date="2008-10" db="EMBL/GenBank/DDBJ databases">
        <title>Genome sequence of Bacillus anthracis str. CDC 684.</title>
        <authorList>
            <person name="Dodson R.J."/>
            <person name="Munk A.C."/>
            <person name="Brettin T."/>
            <person name="Bruce D."/>
            <person name="Detter C."/>
            <person name="Tapia R."/>
            <person name="Han C."/>
            <person name="Sutton G."/>
            <person name="Sims D."/>
        </authorList>
    </citation>
    <scope>NUCLEOTIDE SEQUENCE [LARGE SCALE GENOMIC DNA]</scope>
    <source>
        <strain>CDC 684 / NRRL 3495</strain>
    </source>
</reference>
<dbReference type="EC" id="5.6.1.7" evidence="1"/>
<dbReference type="EMBL" id="CP001215">
    <property type="protein sequence ID" value="ACP15006.1"/>
    <property type="molecule type" value="Genomic_DNA"/>
</dbReference>
<dbReference type="RefSeq" id="WP_001030000.1">
    <property type="nucleotide sequence ID" value="NC_012581.1"/>
</dbReference>
<dbReference type="SMR" id="C3L507"/>
<dbReference type="GeneID" id="45020321"/>
<dbReference type="KEGG" id="bah:BAMEG_0312"/>
<dbReference type="HOGENOM" id="CLU_016503_3_0_9"/>
<dbReference type="GO" id="GO:0005737">
    <property type="term" value="C:cytoplasm"/>
    <property type="evidence" value="ECO:0007669"/>
    <property type="project" value="UniProtKB-SubCell"/>
</dbReference>
<dbReference type="GO" id="GO:0005524">
    <property type="term" value="F:ATP binding"/>
    <property type="evidence" value="ECO:0007669"/>
    <property type="project" value="UniProtKB-UniRule"/>
</dbReference>
<dbReference type="GO" id="GO:0140662">
    <property type="term" value="F:ATP-dependent protein folding chaperone"/>
    <property type="evidence" value="ECO:0007669"/>
    <property type="project" value="InterPro"/>
</dbReference>
<dbReference type="GO" id="GO:0016853">
    <property type="term" value="F:isomerase activity"/>
    <property type="evidence" value="ECO:0007669"/>
    <property type="project" value="UniProtKB-KW"/>
</dbReference>
<dbReference type="GO" id="GO:0051082">
    <property type="term" value="F:unfolded protein binding"/>
    <property type="evidence" value="ECO:0007669"/>
    <property type="project" value="UniProtKB-UniRule"/>
</dbReference>
<dbReference type="GO" id="GO:0042026">
    <property type="term" value="P:protein refolding"/>
    <property type="evidence" value="ECO:0007669"/>
    <property type="project" value="UniProtKB-UniRule"/>
</dbReference>
<dbReference type="CDD" id="cd03344">
    <property type="entry name" value="GroEL"/>
    <property type="match status" value="1"/>
</dbReference>
<dbReference type="FunFam" id="1.10.560.10:FF:000001">
    <property type="entry name" value="60 kDa chaperonin"/>
    <property type="match status" value="1"/>
</dbReference>
<dbReference type="FunFam" id="3.50.7.10:FF:000001">
    <property type="entry name" value="60 kDa chaperonin"/>
    <property type="match status" value="1"/>
</dbReference>
<dbReference type="Gene3D" id="3.50.7.10">
    <property type="entry name" value="GroEL"/>
    <property type="match status" value="1"/>
</dbReference>
<dbReference type="Gene3D" id="1.10.560.10">
    <property type="entry name" value="GroEL-like equatorial domain"/>
    <property type="match status" value="1"/>
</dbReference>
<dbReference type="Gene3D" id="3.30.260.10">
    <property type="entry name" value="TCP-1-like chaperonin intermediate domain"/>
    <property type="match status" value="1"/>
</dbReference>
<dbReference type="HAMAP" id="MF_00600">
    <property type="entry name" value="CH60"/>
    <property type="match status" value="1"/>
</dbReference>
<dbReference type="InterPro" id="IPR018370">
    <property type="entry name" value="Chaperonin_Cpn60_CS"/>
</dbReference>
<dbReference type="InterPro" id="IPR001844">
    <property type="entry name" value="Cpn60/GroEL"/>
</dbReference>
<dbReference type="InterPro" id="IPR002423">
    <property type="entry name" value="Cpn60/GroEL/TCP-1"/>
</dbReference>
<dbReference type="InterPro" id="IPR027409">
    <property type="entry name" value="GroEL-like_apical_dom_sf"/>
</dbReference>
<dbReference type="InterPro" id="IPR027413">
    <property type="entry name" value="GROEL-like_equatorial_sf"/>
</dbReference>
<dbReference type="InterPro" id="IPR027410">
    <property type="entry name" value="TCP-1-like_intermed_sf"/>
</dbReference>
<dbReference type="NCBIfam" id="TIGR02348">
    <property type="entry name" value="GroEL"/>
    <property type="match status" value="1"/>
</dbReference>
<dbReference type="NCBIfam" id="NF000592">
    <property type="entry name" value="PRK00013.1"/>
    <property type="match status" value="1"/>
</dbReference>
<dbReference type="NCBIfam" id="NF009487">
    <property type="entry name" value="PRK12849.1"/>
    <property type="match status" value="1"/>
</dbReference>
<dbReference type="NCBIfam" id="NF009488">
    <property type="entry name" value="PRK12850.1"/>
    <property type="match status" value="1"/>
</dbReference>
<dbReference type="NCBIfam" id="NF009489">
    <property type="entry name" value="PRK12851.1"/>
    <property type="match status" value="1"/>
</dbReference>
<dbReference type="PANTHER" id="PTHR45633">
    <property type="entry name" value="60 KDA HEAT SHOCK PROTEIN, MITOCHONDRIAL"/>
    <property type="match status" value="1"/>
</dbReference>
<dbReference type="Pfam" id="PF00118">
    <property type="entry name" value="Cpn60_TCP1"/>
    <property type="match status" value="1"/>
</dbReference>
<dbReference type="PRINTS" id="PR00298">
    <property type="entry name" value="CHAPERONIN60"/>
</dbReference>
<dbReference type="SUPFAM" id="SSF52029">
    <property type="entry name" value="GroEL apical domain-like"/>
    <property type="match status" value="1"/>
</dbReference>
<dbReference type="SUPFAM" id="SSF48592">
    <property type="entry name" value="GroEL equatorial domain-like"/>
    <property type="match status" value="1"/>
</dbReference>
<dbReference type="SUPFAM" id="SSF54849">
    <property type="entry name" value="GroEL-intermediate domain like"/>
    <property type="match status" value="1"/>
</dbReference>
<dbReference type="PROSITE" id="PS00296">
    <property type="entry name" value="CHAPERONINS_CPN60"/>
    <property type="match status" value="1"/>
</dbReference>
<name>CH60_BACAC</name>
<feature type="chain" id="PRO_1000147014" description="Chaperonin GroEL">
    <location>
        <begin position="1"/>
        <end position="544"/>
    </location>
</feature>
<feature type="binding site" evidence="1">
    <location>
        <begin position="29"/>
        <end position="32"/>
    </location>
    <ligand>
        <name>ATP</name>
        <dbReference type="ChEBI" id="CHEBI:30616"/>
    </ligand>
</feature>
<feature type="binding site" evidence="1">
    <location>
        <begin position="86"/>
        <end position="90"/>
    </location>
    <ligand>
        <name>ATP</name>
        <dbReference type="ChEBI" id="CHEBI:30616"/>
    </ligand>
</feature>
<feature type="binding site" evidence="1">
    <location>
        <position position="413"/>
    </location>
    <ligand>
        <name>ATP</name>
        <dbReference type="ChEBI" id="CHEBI:30616"/>
    </ligand>
</feature>
<feature type="binding site" evidence="1">
    <location>
        <begin position="476"/>
        <end position="478"/>
    </location>
    <ligand>
        <name>ATP</name>
        <dbReference type="ChEBI" id="CHEBI:30616"/>
    </ligand>
</feature>
<feature type="binding site" evidence="1">
    <location>
        <position position="492"/>
    </location>
    <ligand>
        <name>ATP</name>
        <dbReference type="ChEBI" id="CHEBI:30616"/>
    </ligand>
</feature>
<protein>
    <recommendedName>
        <fullName evidence="1">Chaperonin GroEL</fullName>
        <ecNumber evidence="1">5.6.1.7</ecNumber>
    </recommendedName>
    <alternativeName>
        <fullName evidence="1">60 kDa chaperonin</fullName>
    </alternativeName>
    <alternativeName>
        <fullName evidence="1">Chaperonin-60</fullName>
        <shortName evidence="1">Cpn60</shortName>
    </alternativeName>
</protein>
<accession>C3L507</accession>
<keyword id="KW-0067">ATP-binding</keyword>
<keyword id="KW-0143">Chaperone</keyword>
<keyword id="KW-0963">Cytoplasm</keyword>
<keyword id="KW-0413">Isomerase</keyword>
<keyword id="KW-0547">Nucleotide-binding</keyword>
<comment type="function">
    <text evidence="1">Together with its co-chaperonin GroES, plays an essential role in assisting protein folding. The GroEL-GroES system forms a nano-cage that allows encapsulation of the non-native substrate proteins and provides a physical environment optimized to promote and accelerate protein folding.</text>
</comment>
<comment type="catalytic activity">
    <reaction evidence="1">
        <text>ATP + H2O + a folded polypeptide = ADP + phosphate + an unfolded polypeptide.</text>
        <dbReference type="EC" id="5.6.1.7"/>
    </reaction>
</comment>
<comment type="subunit">
    <text evidence="1">Forms a cylinder of 14 subunits composed of two heptameric rings stacked back-to-back. Interacts with the co-chaperonin GroES.</text>
</comment>
<comment type="subcellular location">
    <subcellularLocation>
        <location evidence="1">Cytoplasm</location>
    </subcellularLocation>
</comment>
<comment type="similarity">
    <text evidence="1">Belongs to the chaperonin (HSP60) family.</text>
</comment>
<organism>
    <name type="scientific">Bacillus anthracis (strain CDC 684 / NRRL 3495)</name>
    <dbReference type="NCBI Taxonomy" id="568206"/>
    <lineage>
        <taxon>Bacteria</taxon>
        <taxon>Bacillati</taxon>
        <taxon>Bacillota</taxon>
        <taxon>Bacilli</taxon>
        <taxon>Bacillales</taxon>
        <taxon>Bacillaceae</taxon>
        <taxon>Bacillus</taxon>
        <taxon>Bacillus cereus group</taxon>
    </lineage>
</organism>
<evidence type="ECO:0000255" key="1">
    <source>
        <dbReference type="HAMAP-Rule" id="MF_00600"/>
    </source>
</evidence>
<proteinExistence type="inferred from homology"/>